<gene>
    <name evidence="1" type="primary">ycf4</name>
</gene>
<comment type="function">
    <text evidence="1">Seems to be required for the assembly of the photosystem I complex.</text>
</comment>
<comment type="subcellular location">
    <subcellularLocation>
        <location evidence="1">Plastid</location>
        <location evidence="1">Chloroplast thylakoid membrane</location>
        <topology evidence="1">Multi-pass membrane protein</topology>
    </subcellularLocation>
</comment>
<comment type="similarity">
    <text evidence="1">Belongs to the Ycf4 family.</text>
</comment>
<name>YCF4_IPOPU</name>
<sequence length="184" mass="21467">MSWRSEHIWIELLPGSRKISNFCWAFILFLGSLGFLLVGISSYLGRNLISFFPSQQIIFFPQGIVMSFYGIAGLFISSYLWCTISWNVGSGYDLFDRREGIVCIFRWGFPGRNRRIFLRFLIKDIRSVRIEVKEGIYARRVLYMDIRGQRAIPLTRTDENLTPGEIEKKAAELAYFLRVPIEVF</sequence>
<organism>
    <name type="scientific">Ipomoea purpurea</name>
    <name type="common">Common morning glory</name>
    <name type="synonym">Pharbitis purpurea</name>
    <dbReference type="NCBI Taxonomy" id="4121"/>
    <lineage>
        <taxon>Eukaryota</taxon>
        <taxon>Viridiplantae</taxon>
        <taxon>Streptophyta</taxon>
        <taxon>Embryophyta</taxon>
        <taxon>Tracheophyta</taxon>
        <taxon>Spermatophyta</taxon>
        <taxon>Magnoliopsida</taxon>
        <taxon>eudicotyledons</taxon>
        <taxon>Gunneridae</taxon>
        <taxon>Pentapetalae</taxon>
        <taxon>asterids</taxon>
        <taxon>lamiids</taxon>
        <taxon>Solanales</taxon>
        <taxon>Convolvulaceae</taxon>
        <taxon>Ipomoeeae</taxon>
        <taxon>Ipomoea</taxon>
    </lineage>
</organism>
<reference key="1">
    <citation type="journal article" date="2007" name="BMC Plant Biol.">
        <title>Complete plastid genome sequences suggest strong selection for retention of photosynthetic genes in the parasitic plant genus Cuscuta.</title>
        <authorList>
            <person name="McNeal J.R."/>
            <person name="Kuehl J.V."/>
            <person name="Boore J.L."/>
            <person name="dePamphilis C.W."/>
        </authorList>
    </citation>
    <scope>NUCLEOTIDE SEQUENCE [LARGE SCALE GENOMIC DNA]</scope>
</reference>
<keyword id="KW-0150">Chloroplast</keyword>
<keyword id="KW-0472">Membrane</keyword>
<keyword id="KW-0602">Photosynthesis</keyword>
<keyword id="KW-0934">Plastid</keyword>
<keyword id="KW-0793">Thylakoid</keyword>
<keyword id="KW-0812">Transmembrane</keyword>
<keyword id="KW-1133">Transmembrane helix</keyword>
<geneLocation type="chloroplast"/>
<proteinExistence type="inferred from homology"/>
<evidence type="ECO:0000255" key="1">
    <source>
        <dbReference type="HAMAP-Rule" id="MF_00437"/>
    </source>
</evidence>
<dbReference type="EMBL" id="EU118126">
    <property type="protein sequence ID" value="ABV02359.1"/>
    <property type="molecule type" value="Genomic_DNA"/>
</dbReference>
<dbReference type="RefSeq" id="YP_001468319.1">
    <property type="nucleotide sequence ID" value="NC_009808.1"/>
</dbReference>
<dbReference type="GeneID" id="5601240"/>
<dbReference type="GO" id="GO:0009535">
    <property type="term" value="C:chloroplast thylakoid membrane"/>
    <property type="evidence" value="ECO:0007669"/>
    <property type="project" value="UniProtKB-SubCell"/>
</dbReference>
<dbReference type="GO" id="GO:0009522">
    <property type="term" value="C:photosystem I"/>
    <property type="evidence" value="ECO:0007669"/>
    <property type="project" value="InterPro"/>
</dbReference>
<dbReference type="GO" id="GO:0015979">
    <property type="term" value="P:photosynthesis"/>
    <property type="evidence" value="ECO:0007669"/>
    <property type="project" value="UniProtKB-UniRule"/>
</dbReference>
<dbReference type="HAMAP" id="MF_00437">
    <property type="entry name" value="Ycf4"/>
    <property type="match status" value="1"/>
</dbReference>
<dbReference type="InterPro" id="IPR003359">
    <property type="entry name" value="PSI_Ycf4_assembly"/>
</dbReference>
<dbReference type="PANTHER" id="PTHR33288">
    <property type="match status" value="1"/>
</dbReference>
<dbReference type="PANTHER" id="PTHR33288:SF4">
    <property type="entry name" value="PHOTOSYSTEM I ASSEMBLY PROTEIN YCF4"/>
    <property type="match status" value="1"/>
</dbReference>
<dbReference type="Pfam" id="PF02392">
    <property type="entry name" value="Ycf4"/>
    <property type="match status" value="1"/>
</dbReference>
<protein>
    <recommendedName>
        <fullName evidence="1">Photosystem I assembly protein Ycf4</fullName>
    </recommendedName>
</protein>
<accession>A7Y3F2</accession>
<feature type="chain" id="PRO_0000326012" description="Photosystem I assembly protein Ycf4">
    <location>
        <begin position="1"/>
        <end position="184"/>
    </location>
</feature>
<feature type="transmembrane region" description="Helical" evidence="1">
    <location>
        <begin position="22"/>
        <end position="42"/>
    </location>
</feature>
<feature type="transmembrane region" description="Helical" evidence="1">
    <location>
        <begin position="57"/>
        <end position="77"/>
    </location>
</feature>